<accession>P16763</accession>
<accession>Q7M6Q6</accession>
<reference key="1">
    <citation type="journal article" date="1990" name="Curr. Top. Microbiol. Immunol.">
        <title>Analysis of the protein-coding content of the sequence of human cytomegalovirus strain AD169.</title>
        <authorList>
            <person name="Chee M.S."/>
            <person name="Bankier A.T."/>
            <person name="Beck S."/>
            <person name="Bohni R."/>
            <person name="Brown C.M."/>
            <person name="Cerny R."/>
            <person name="Horsnell T."/>
            <person name="Hutchison C.A. III"/>
            <person name="Kouzarides T."/>
            <person name="Martignetti J.A."/>
            <person name="Preddie E."/>
            <person name="Satchwell S.C."/>
            <person name="Tomlinson P."/>
            <person name="Weston K.M."/>
            <person name="Barrell B.G."/>
        </authorList>
    </citation>
    <scope>NUCLEOTIDE SEQUENCE [LARGE SCALE GENOMIC DNA]</scope>
</reference>
<reference key="2">
    <citation type="journal article" date="2003" name="J. Gen. Virol.">
        <title>The human cytomegalovirus genome revisited: comparison with the chimpanzee cytomegalovirus genome.</title>
        <authorList>
            <person name="Davison A.J."/>
            <person name="Dolan A."/>
            <person name="Akter P."/>
            <person name="Addison C."/>
            <person name="Dargan D.J."/>
            <person name="Alcendor D.J."/>
            <person name="McGeoch D.J."/>
            <person name="Hayward G.S."/>
        </authorList>
    </citation>
    <scope>GENOME REANNOTATION</scope>
</reference>
<reference key="3">
    <citation type="journal article" date="2003" name="J. Gen. Virol.">
        <authorList>
            <person name="Davison A.J."/>
            <person name="Dolan A."/>
            <person name="Akter P."/>
            <person name="Addison C."/>
            <person name="Dargan D.J."/>
            <person name="Alcendor D.J."/>
            <person name="McGeoch D.J."/>
            <person name="Hayward G.S."/>
        </authorList>
    </citation>
    <scope>ERRATUM OF PUBMED:12533697</scope>
</reference>
<protein>
    <recommendedName>
        <fullName>Protein UL27</fullName>
    </recommendedName>
</protein>
<keyword id="KW-1048">Host nucleus</keyword>
<keyword id="KW-1185">Reference proteome</keyword>
<gene>
    <name type="primary">UL27</name>
</gene>
<proteinExistence type="inferred from homology"/>
<sequence length="608" mass="69220">MNPVDQPPPPLPTQQPEEQAKEDHDDGDERLFRDPLTTYEYLDDCRDDEEFCHQFLRAYLTPIRNRQEAVRAGLLCRTPEDLAAAGGQKKKTPAPKHPKHAMVYIRRSCLVHSACATAHGKYDIRGLTLESDLAVWAALRGVPLPPDPQHFRWLNAGAFRRLVHEAQYLPEISRAAKRIALAVATGQYVVCTLLDYKTFGTRTHYLRQLCSMTEELYLRLDGTLCLFLEPEERELIGRCLPAALCRGLPVKYRTHRAAVFFHATFMARAEAALKDLYAAFCECGDGRDNGGNHDGNHDGNDHSSLSPSAVASHHSRLEHAELRLERNRHLGAFHLPAIRHLTAGDVARVQDSVSRDLGFADWSQTLIDDYFLLPAGWACANPRRGYAMYLASNAVLALRIIRLLRASIRHEYTACIRMLSGDVQRLIRLFKGEAALLRKGLAQNPVQRRELSRFRKHVHDLKRIRFTEDTFVETFCDFLELVQRIPDYRSVSLRIKRELLCLHVFKLRRGCRAPPTPETARVQRLLWHSLRHGDAPQDRTRLPQFSSALSDAELSNHANRCRRKAPLELGPAVVAAPGPSVRYRAHIQKFERLHVRRFRPHEVGGHAT</sequence>
<comment type="function">
    <text evidence="1">Promotes a cell cycle arrest in G0/G1 by inducing the proteasomal degradation of host histone acetyltransferase KAT5/Tip60.</text>
</comment>
<comment type="subunit">
    <text evidence="1">Interacts with host KAT5, PSME3 and EP400.</text>
</comment>
<comment type="subcellular location">
    <subcellularLocation>
        <location evidence="1">Host nucleus</location>
    </subcellularLocation>
    <subcellularLocation>
        <location evidence="1">Host nucleus</location>
        <location evidence="1">Host nucleolus</location>
    </subcellularLocation>
</comment>
<comment type="similarity">
    <text evidence="3">Belongs to the herpesviridae U4 family.</text>
</comment>
<name>UL27_HCMVA</name>
<organism>
    <name type="scientific">Human cytomegalovirus (strain AD169)</name>
    <name type="common">HHV-5</name>
    <name type="synonym">Human herpesvirus 5</name>
    <dbReference type="NCBI Taxonomy" id="10360"/>
    <lineage>
        <taxon>Viruses</taxon>
        <taxon>Duplodnaviria</taxon>
        <taxon>Heunggongvirae</taxon>
        <taxon>Peploviricota</taxon>
        <taxon>Herviviricetes</taxon>
        <taxon>Herpesvirales</taxon>
        <taxon>Orthoherpesviridae</taxon>
        <taxon>Betaherpesvirinae</taxon>
        <taxon>Cytomegalovirus</taxon>
        <taxon>Cytomegalovirus humanbeta5</taxon>
        <taxon>Human cytomegalovirus</taxon>
    </lineage>
</organism>
<organismHost>
    <name type="scientific">Homo sapiens</name>
    <name type="common">Human</name>
    <dbReference type="NCBI Taxonomy" id="9606"/>
</organismHost>
<evidence type="ECO:0000250" key="1">
    <source>
        <dbReference type="UniProtKB" id="Q6SWA4"/>
    </source>
</evidence>
<evidence type="ECO:0000256" key="2">
    <source>
        <dbReference type="SAM" id="MobiDB-lite"/>
    </source>
</evidence>
<evidence type="ECO:0000305" key="3"/>
<feature type="chain" id="PRO_0000116312" description="Protein UL27">
    <location>
        <begin position="1"/>
        <end position="608"/>
    </location>
</feature>
<feature type="region of interest" description="Disordered" evidence="2">
    <location>
        <begin position="1"/>
        <end position="33"/>
    </location>
</feature>
<feature type="compositionally biased region" description="Pro residues" evidence="2">
    <location>
        <begin position="1"/>
        <end position="13"/>
    </location>
</feature>
<feature type="compositionally biased region" description="Basic and acidic residues" evidence="2">
    <location>
        <begin position="18"/>
        <end position="33"/>
    </location>
</feature>
<dbReference type="EMBL" id="X17403">
    <property type="protein sequence ID" value="CAA35426.1"/>
    <property type="molecule type" value="Genomic_DNA"/>
</dbReference>
<dbReference type="EMBL" id="BK000394">
    <property type="protein sequence ID" value="DAA00131.1"/>
    <property type="molecule type" value="Genomic_DNA"/>
</dbReference>
<dbReference type="PIR" id="S09790">
    <property type="entry name" value="S09790"/>
</dbReference>
<dbReference type="SMR" id="P16763"/>
<dbReference type="Proteomes" id="UP000008991">
    <property type="component" value="Segment"/>
</dbReference>
<dbReference type="Proteomes" id="UP000008992">
    <property type="component" value="Segment"/>
</dbReference>
<dbReference type="GO" id="GO:0044196">
    <property type="term" value="C:host cell nucleolus"/>
    <property type="evidence" value="ECO:0007669"/>
    <property type="project" value="UniProtKB-SubCell"/>
</dbReference>
<dbReference type="InterPro" id="IPR010302">
    <property type="entry name" value="UL27-like_protein_herpesevirus"/>
</dbReference>
<dbReference type="Pfam" id="PF05999">
    <property type="entry name" value="Herpes_U5"/>
    <property type="match status" value="1"/>
</dbReference>